<proteinExistence type="inferred from homology"/>
<comment type="function">
    <text evidence="1">Na(+)/H(+) antiporter that extrudes sodium in exchange for external protons.</text>
</comment>
<comment type="catalytic activity">
    <reaction evidence="1">
        <text>Na(+)(in) + 2 H(+)(out) = Na(+)(out) + 2 H(+)(in)</text>
        <dbReference type="Rhea" id="RHEA:29251"/>
        <dbReference type="ChEBI" id="CHEBI:15378"/>
        <dbReference type="ChEBI" id="CHEBI:29101"/>
    </reaction>
    <physiologicalReaction direction="left-to-right" evidence="1">
        <dbReference type="Rhea" id="RHEA:29252"/>
    </physiologicalReaction>
</comment>
<comment type="subcellular location">
    <subcellularLocation>
        <location evidence="1">Cell inner membrane</location>
        <topology evidence="1">Multi-pass membrane protein</topology>
    </subcellularLocation>
</comment>
<comment type="similarity">
    <text evidence="1">Belongs to the NhaA Na(+)/H(+) (TC 2.A.33) antiporter family.</text>
</comment>
<feature type="chain" id="PRO_0000334463" description="Na(+)/H(+) antiporter NhaA">
    <location>
        <begin position="1"/>
        <end position="389"/>
    </location>
</feature>
<feature type="transmembrane region" description="Helical" evidence="1">
    <location>
        <begin position="14"/>
        <end position="34"/>
    </location>
</feature>
<feature type="transmembrane region" description="Helical" evidence="1">
    <location>
        <begin position="47"/>
        <end position="67"/>
    </location>
</feature>
<feature type="transmembrane region" description="Helical" evidence="1">
    <location>
        <begin position="87"/>
        <end position="107"/>
    </location>
</feature>
<feature type="transmembrane region" description="Helical" evidence="1">
    <location>
        <begin position="117"/>
        <end position="137"/>
    </location>
</feature>
<feature type="transmembrane region" description="Helical" evidence="1">
    <location>
        <begin position="146"/>
        <end position="166"/>
    </location>
</feature>
<feature type="transmembrane region" description="Helical" evidence="1">
    <location>
        <begin position="171"/>
        <end position="191"/>
    </location>
</feature>
<feature type="transmembrane region" description="Helical" evidence="1">
    <location>
        <begin position="197"/>
        <end position="217"/>
    </location>
</feature>
<feature type="transmembrane region" description="Helical" evidence="1">
    <location>
        <begin position="252"/>
        <end position="272"/>
    </location>
</feature>
<feature type="transmembrane region" description="Helical" evidence="1">
    <location>
        <begin position="280"/>
        <end position="300"/>
    </location>
</feature>
<feature type="transmembrane region" description="Helical" evidence="1">
    <location>
        <begin position="321"/>
        <end position="341"/>
    </location>
</feature>
<feature type="transmembrane region" description="Helical" evidence="1">
    <location>
        <begin position="356"/>
        <end position="376"/>
    </location>
</feature>
<dbReference type="EMBL" id="BA000037">
    <property type="protein sequence ID" value="BAC94198.1"/>
    <property type="molecule type" value="Genomic_DNA"/>
</dbReference>
<dbReference type="RefSeq" id="WP_011080661.1">
    <property type="nucleotide sequence ID" value="NC_005139.1"/>
</dbReference>
<dbReference type="SMR" id="Q7MLJ3"/>
<dbReference type="STRING" id="672.VV93_v1c13460"/>
<dbReference type="KEGG" id="vvy:VV1434"/>
<dbReference type="eggNOG" id="COG3004">
    <property type="taxonomic scope" value="Bacteria"/>
</dbReference>
<dbReference type="HOGENOM" id="CLU_015803_1_0_6"/>
<dbReference type="Proteomes" id="UP000002675">
    <property type="component" value="Chromosome I"/>
</dbReference>
<dbReference type="GO" id="GO:0005886">
    <property type="term" value="C:plasma membrane"/>
    <property type="evidence" value="ECO:0007669"/>
    <property type="project" value="UniProtKB-SubCell"/>
</dbReference>
<dbReference type="GO" id="GO:0015385">
    <property type="term" value="F:sodium:proton antiporter activity"/>
    <property type="evidence" value="ECO:0007669"/>
    <property type="project" value="TreeGrafter"/>
</dbReference>
<dbReference type="GO" id="GO:0006885">
    <property type="term" value="P:regulation of pH"/>
    <property type="evidence" value="ECO:0007669"/>
    <property type="project" value="InterPro"/>
</dbReference>
<dbReference type="Gene3D" id="1.20.1530.10">
    <property type="entry name" value="Na+/H+ antiporter like domain"/>
    <property type="match status" value="1"/>
</dbReference>
<dbReference type="HAMAP" id="MF_01844">
    <property type="entry name" value="NhaA"/>
    <property type="match status" value="1"/>
</dbReference>
<dbReference type="InterPro" id="IPR023171">
    <property type="entry name" value="Na/H_antiporter_dom_sf"/>
</dbReference>
<dbReference type="InterPro" id="IPR004670">
    <property type="entry name" value="NhaA"/>
</dbReference>
<dbReference type="NCBIfam" id="TIGR00773">
    <property type="entry name" value="NhaA"/>
    <property type="match status" value="1"/>
</dbReference>
<dbReference type="NCBIfam" id="NF007111">
    <property type="entry name" value="PRK09560.1"/>
    <property type="match status" value="1"/>
</dbReference>
<dbReference type="NCBIfam" id="NF007112">
    <property type="entry name" value="PRK09561.1"/>
    <property type="match status" value="1"/>
</dbReference>
<dbReference type="PANTHER" id="PTHR30341:SF0">
    <property type="entry name" value="NA(+)_H(+) ANTIPORTER NHAA"/>
    <property type="match status" value="1"/>
</dbReference>
<dbReference type="PANTHER" id="PTHR30341">
    <property type="entry name" value="SODIUM ION/PROTON ANTIPORTER NHAA-RELATED"/>
    <property type="match status" value="1"/>
</dbReference>
<dbReference type="Pfam" id="PF06965">
    <property type="entry name" value="Na_H_antiport_1"/>
    <property type="match status" value="1"/>
</dbReference>
<name>NHAA_VIBVY</name>
<evidence type="ECO:0000255" key="1">
    <source>
        <dbReference type="HAMAP-Rule" id="MF_01844"/>
    </source>
</evidence>
<keyword id="KW-0050">Antiport</keyword>
<keyword id="KW-0997">Cell inner membrane</keyword>
<keyword id="KW-1003">Cell membrane</keyword>
<keyword id="KW-0406">Ion transport</keyword>
<keyword id="KW-0472">Membrane</keyword>
<keyword id="KW-0915">Sodium</keyword>
<keyword id="KW-0739">Sodium transport</keyword>
<keyword id="KW-0812">Transmembrane</keyword>
<keyword id="KW-1133">Transmembrane helix</keyword>
<keyword id="KW-0813">Transport</keyword>
<sequence length="389" mass="41073">MNDVIRDFFKMESAGGILLVIAAAIAMVIANSPLNESYQAVLHTYVFGMSVSHWINDGLMAIFFLLIGLEVKRELLEGALKSRETAIFPAIAAVGGMLAPALIYVAFNGNDPEAIKGWAIPAATDIAFALGIMALLGKRVPVSLKVFLLALAIIDDLGVVVIIALFYSGDLSTLALTVGFAMTGVLFMLNAKNVTKLIWYIVVGFILWVAVLKSGVHATLAGVVIGFSIPLQGKKGEHSPLKHMEHALHPYVAFAILPVFAFANAGISLEGVSLSGLTSMLPLGIALGLLVGKPLGIFTFSWAAVKFGVAKLPEGVNFKHIFAVSVLCGIGFTMSIFISSLAFGGANPDFDTYSRLGILMGSTTAAVLGYFLLHVSLPKTAAESEKAIS</sequence>
<protein>
    <recommendedName>
        <fullName evidence="1">Na(+)/H(+) antiporter NhaA</fullName>
    </recommendedName>
    <alternativeName>
        <fullName evidence="1">Sodium/proton antiporter NhaA</fullName>
    </alternativeName>
</protein>
<reference key="1">
    <citation type="journal article" date="2003" name="Genome Res.">
        <title>Comparative genome analysis of Vibrio vulnificus, a marine pathogen.</title>
        <authorList>
            <person name="Chen C.-Y."/>
            <person name="Wu K.-M."/>
            <person name="Chang Y.-C."/>
            <person name="Chang C.-H."/>
            <person name="Tsai H.-C."/>
            <person name="Liao T.-L."/>
            <person name="Liu Y.-M."/>
            <person name="Chen H.-J."/>
            <person name="Shen A.B.-T."/>
            <person name="Li J.-C."/>
            <person name="Su T.-L."/>
            <person name="Shao C.-P."/>
            <person name="Lee C.-T."/>
            <person name="Hor L.-I."/>
            <person name="Tsai S.-F."/>
        </authorList>
    </citation>
    <scope>NUCLEOTIDE SEQUENCE [LARGE SCALE GENOMIC DNA]</scope>
    <source>
        <strain>YJ016</strain>
    </source>
</reference>
<accession>Q7MLJ3</accession>
<gene>
    <name evidence="1" type="primary">nhaA</name>
    <name type="ordered locus">VV1434</name>
</gene>
<organism>
    <name type="scientific">Vibrio vulnificus (strain YJ016)</name>
    <dbReference type="NCBI Taxonomy" id="196600"/>
    <lineage>
        <taxon>Bacteria</taxon>
        <taxon>Pseudomonadati</taxon>
        <taxon>Pseudomonadota</taxon>
        <taxon>Gammaproteobacteria</taxon>
        <taxon>Vibrionales</taxon>
        <taxon>Vibrionaceae</taxon>
        <taxon>Vibrio</taxon>
    </lineage>
</organism>